<protein>
    <recommendedName>
        <fullName evidence="1">Large ribosomal subunit protein bL21</fullName>
    </recommendedName>
    <alternativeName>
        <fullName evidence="2">50S ribosomal protein L21</fullName>
    </alternativeName>
</protein>
<sequence length="103" mass="11251">MYAVIKTGGKQYRVASGEKIKVEQIAADVGQEIVIDQVLAVGNGAELKVGTPLVSGATVTATVVAHGKHDKVRIFKMRRRKHYQKRQGHRQQFTELQIGAIAA</sequence>
<accession>A1TTD5</accession>
<evidence type="ECO:0000255" key="1">
    <source>
        <dbReference type="HAMAP-Rule" id="MF_01363"/>
    </source>
</evidence>
<evidence type="ECO:0000305" key="2"/>
<comment type="function">
    <text evidence="1">This protein binds to 23S rRNA in the presence of protein L20.</text>
</comment>
<comment type="subunit">
    <text evidence="1">Part of the 50S ribosomal subunit. Contacts protein L20.</text>
</comment>
<comment type="similarity">
    <text evidence="1">Belongs to the bacterial ribosomal protein bL21 family.</text>
</comment>
<organism>
    <name type="scientific">Paracidovorax citrulli (strain AAC00-1)</name>
    <name type="common">Acidovorax citrulli</name>
    <dbReference type="NCBI Taxonomy" id="397945"/>
    <lineage>
        <taxon>Bacteria</taxon>
        <taxon>Pseudomonadati</taxon>
        <taxon>Pseudomonadota</taxon>
        <taxon>Betaproteobacteria</taxon>
        <taxon>Burkholderiales</taxon>
        <taxon>Comamonadaceae</taxon>
        <taxon>Paracidovorax</taxon>
    </lineage>
</organism>
<dbReference type="EMBL" id="CP000512">
    <property type="protein sequence ID" value="ABM34223.1"/>
    <property type="molecule type" value="Genomic_DNA"/>
</dbReference>
<dbReference type="RefSeq" id="WP_011796717.1">
    <property type="nucleotide sequence ID" value="NC_008752.1"/>
</dbReference>
<dbReference type="SMR" id="A1TTD5"/>
<dbReference type="STRING" id="397945.Aave_3675"/>
<dbReference type="GeneID" id="79791435"/>
<dbReference type="KEGG" id="aav:Aave_3675"/>
<dbReference type="eggNOG" id="COG0261">
    <property type="taxonomic scope" value="Bacteria"/>
</dbReference>
<dbReference type="HOGENOM" id="CLU_061463_3_2_4"/>
<dbReference type="OrthoDB" id="9813334at2"/>
<dbReference type="Proteomes" id="UP000002596">
    <property type="component" value="Chromosome"/>
</dbReference>
<dbReference type="GO" id="GO:0005737">
    <property type="term" value="C:cytoplasm"/>
    <property type="evidence" value="ECO:0007669"/>
    <property type="project" value="UniProtKB-ARBA"/>
</dbReference>
<dbReference type="GO" id="GO:1990904">
    <property type="term" value="C:ribonucleoprotein complex"/>
    <property type="evidence" value="ECO:0007669"/>
    <property type="project" value="UniProtKB-KW"/>
</dbReference>
<dbReference type="GO" id="GO:0005840">
    <property type="term" value="C:ribosome"/>
    <property type="evidence" value="ECO:0007669"/>
    <property type="project" value="UniProtKB-KW"/>
</dbReference>
<dbReference type="GO" id="GO:0019843">
    <property type="term" value="F:rRNA binding"/>
    <property type="evidence" value="ECO:0007669"/>
    <property type="project" value="UniProtKB-UniRule"/>
</dbReference>
<dbReference type="GO" id="GO:0003735">
    <property type="term" value="F:structural constituent of ribosome"/>
    <property type="evidence" value="ECO:0007669"/>
    <property type="project" value="InterPro"/>
</dbReference>
<dbReference type="GO" id="GO:0006412">
    <property type="term" value="P:translation"/>
    <property type="evidence" value="ECO:0007669"/>
    <property type="project" value="UniProtKB-UniRule"/>
</dbReference>
<dbReference type="HAMAP" id="MF_01363">
    <property type="entry name" value="Ribosomal_bL21"/>
    <property type="match status" value="1"/>
</dbReference>
<dbReference type="InterPro" id="IPR028909">
    <property type="entry name" value="bL21-like"/>
</dbReference>
<dbReference type="InterPro" id="IPR036164">
    <property type="entry name" value="bL21-like_sf"/>
</dbReference>
<dbReference type="InterPro" id="IPR001787">
    <property type="entry name" value="Ribosomal_bL21"/>
</dbReference>
<dbReference type="InterPro" id="IPR018258">
    <property type="entry name" value="Ribosomal_bL21_CS"/>
</dbReference>
<dbReference type="NCBIfam" id="TIGR00061">
    <property type="entry name" value="L21"/>
    <property type="match status" value="1"/>
</dbReference>
<dbReference type="PANTHER" id="PTHR21349">
    <property type="entry name" value="50S RIBOSOMAL PROTEIN L21"/>
    <property type="match status" value="1"/>
</dbReference>
<dbReference type="PANTHER" id="PTHR21349:SF0">
    <property type="entry name" value="LARGE RIBOSOMAL SUBUNIT PROTEIN BL21M"/>
    <property type="match status" value="1"/>
</dbReference>
<dbReference type="Pfam" id="PF00829">
    <property type="entry name" value="Ribosomal_L21p"/>
    <property type="match status" value="1"/>
</dbReference>
<dbReference type="SUPFAM" id="SSF141091">
    <property type="entry name" value="L21p-like"/>
    <property type="match status" value="1"/>
</dbReference>
<dbReference type="PROSITE" id="PS01169">
    <property type="entry name" value="RIBOSOMAL_L21"/>
    <property type="match status" value="1"/>
</dbReference>
<reference key="1">
    <citation type="submission" date="2006-12" db="EMBL/GenBank/DDBJ databases">
        <title>Complete sequence of Acidovorax avenae subsp. citrulli AAC00-1.</title>
        <authorList>
            <person name="Copeland A."/>
            <person name="Lucas S."/>
            <person name="Lapidus A."/>
            <person name="Barry K."/>
            <person name="Detter J.C."/>
            <person name="Glavina del Rio T."/>
            <person name="Dalin E."/>
            <person name="Tice H."/>
            <person name="Pitluck S."/>
            <person name="Kiss H."/>
            <person name="Brettin T."/>
            <person name="Bruce D."/>
            <person name="Han C."/>
            <person name="Tapia R."/>
            <person name="Gilna P."/>
            <person name="Schmutz J."/>
            <person name="Larimer F."/>
            <person name="Land M."/>
            <person name="Hauser L."/>
            <person name="Kyrpides N."/>
            <person name="Kim E."/>
            <person name="Stahl D."/>
            <person name="Richardson P."/>
        </authorList>
    </citation>
    <scope>NUCLEOTIDE SEQUENCE [LARGE SCALE GENOMIC DNA]</scope>
    <source>
        <strain>AAC00-1</strain>
    </source>
</reference>
<name>RL21_PARC0</name>
<keyword id="KW-0687">Ribonucleoprotein</keyword>
<keyword id="KW-0689">Ribosomal protein</keyword>
<keyword id="KW-0694">RNA-binding</keyword>
<keyword id="KW-0699">rRNA-binding</keyword>
<gene>
    <name evidence="1" type="primary">rplU</name>
    <name type="ordered locus">Aave_3675</name>
</gene>
<proteinExistence type="inferred from homology"/>
<feature type="chain" id="PRO_1000067790" description="Large ribosomal subunit protein bL21">
    <location>
        <begin position="1"/>
        <end position="103"/>
    </location>
</feature>